<organism evidence="9">
    <name type="scientific">Entamoeba histolytica (strain ATCC 30459 / HM-1:IMSS / ABRM)</name>
    <dbReference type="NCBI Taxonomy" id="294381"/>
    <lineage>
        <taxon>Eukaryota</taxon>
        <taxon>Amoebozoa</taxon>
        <taxon>Evosea</taxon>
        <taxon>Archamoebae</taxon>
        <taxon>Mastigamoebida</taxon>
        <taxon>Entamoebidae</taxon>
        <taxon>Entamoeba</taxon>
    </lineage>
</organism>
<protein>
    <recommendedName>
        <fullName evidence="8">Pore-forming peptide amoebapore A</fullName>
    </recommendedName>
    <alternativeName>
        <fullName evidence="8">EhAPP A</fullName>
    </alternativeName>
</protein>
<evidence type="ECO:0000255" key="1">
    <source>
        <dbReference type="PROSITE-ProRule" id="PRU00415"/>
    </source>
</evidence>
<evidence type="ECO:0000269" key="2">
    <source>
    </source>
</evidence>
<evidence type="ECO:0000269" key="3">
    <source>
    </source>
</evidence>
<evidence type="ECO:0000269" key="4">
    <source>
    </source>
</evidence>
<evidence type="ECO:0000269" key="5">
    <source>
    </source>
</evidence>
<evidence type="ECO:0000269" key="6">
    <source>
    </source>
</evidence>
<evidence type="ECO:0000269" key="7">
    <source>
    </source>
</evidence>
<evidence type="ECO:0000303" key="8">
    <source>
    </source>
</evidence>
<evidence type="ECO:0000312" key="9">
    <source>
        <dbReference type="EMBL" id="EAL47879.1"/>
    </source>
</evidence>
<evidence type="ECO:0007744" key="10">
    <source>
        <dbReference type="PDB" id="1OF9"/>
    </source>
</evidence>
<evidence type="ECO:0007829" key="11">
    <source>
        <dbReference type="PDB" id="1OF9"/>
    </source>
</evidence>
<name>PFPA_ENTH1</name>
<dbReference type="EMBL" id="M83945">
    <property type="protein sequence ID" value="AAA29111.1"/>
    <property type="molecule type" value="mRNA"/>
</dbReference>
<dbReference type="EMBL" id="X70851">
    <property type="protein sequence ID" value="CAA50203.1"/>
    <property type="molecule type" value="Genomic_DNA"/>
</dbReference>
<dbReference type="EMBL" id="DS571167">
    <property type="protein sequence ID" value="EAL47879.1"/>
    <property type="molecule type" value="Genomic_DNA"/>
</dbReference>
<dbReference type="PIR" id="S25283">
    <property type="entry name" value="S25283"/>
</dbReference>
<dbReference type="RefSeq" id="XP_653265.1">
    <property type="nucleotide sequence ID" value="XM_648173.2"/>
</dbReference>
<dbReference type="PDB" id="1OF9">
    <property type="method" value="NMR"/>
    <property type="chains" value="A=22-98"/>
</dbReference>
<dbReference type="PDBsum" id="1OF9"/>
<dbReference type="SMR" id="P34095"/>
<dbReference type="TCDB" id="1.C.35.1.1">
    <property type="family name" value="the amoebapore (amoebapore) family"/>
</dbReference>
<dbReference type="EnsemblProtists" id="GAT93283">
    <property type="protein sequence ID" value="GAT93283"/>
    <property type="gene ID" value="CL6EHI_159480"/>
</dbReference>
<dbReference type="EnsemblProtists" id="rna_EHI_159480-1">
    <property type="protein sequence ID" value="rna_EHI_159480-1"/>
    <property type="gene ID" value="EHI_159480"/>
</dbReference>
<dbReference type="GeneID" id="3407573"/>
<dbReference type="KEGG" id="ehi:EHI_159480"/>
<dbReference type="VEuPathDB" id="AmoebaDB:EHI5A_171330"/>
<dbReference type="VEuPathDB" id="AmoebaDB:EHI7A_127390"/>
<dbReference type="VEuPathDB" id="AmoebaDB:EHI8A_138030"/>
<dbReference type="VEuPathDB" id="AmoebaDB:EHI_159480"/>
<dbReference type="VEuPathDB" id="AmoebaDB:KM1_215020"/>
<dbReference type="HOGENOM" id="CLU_2337976_0_0_1"/>
<dbReference type="OMA" id="HQGEIIC"/>
<dbReference type="OrthoDB" id="29337at2759"/>
<dbReference type="EvolutionaryTrace" id="P34095"/>
<dbReference type="Proteomes" id="UP000001926">
    <property type="component" value="Partially assembled WGS sequence"/>
</dbReference>
<dbReference type="GO" id="GO:0042742">
    <property type="term" value="P:defense response to bacterium"/>
    <property type="evidence" value="ECO:0007669"/>
    <property type="project" value="UniProtKB-KW"/>
</dbReference>
<dbReference type="Gene3D" id="1.10.225.10">
    <property type="entry name" value="Saposin-like"/>
    <property type="match status" value="1"/>
</dbReference>
<dbReference type="InterPro" id="IPR008138">
    <property type="entry name" value="SapB_2"/>
</dbReference>
<dbReference type="InterPro" id="IPR011001">
    <property type="entry name" value="Saposin-like"/>
</dbReference>
<dbReference type="InterPro" id="IPR008139">
    <property type="entry name" value="SaposinB_dom"/>
</dbReference>
<dbReference type="Pfam" id="PF03489">
    <property type="entry name" value="SapB_2"/>
    <property type="match status" value="1"/>
</dbReference>
<dbReference type="SMART" id="SM00741">
    <property type="entry name" value="SapB"/>
    <property type="match status" value="1"/>
</dbReference>
<dbReference type="SUPFAM" id="SSF47862">
    <property type="entry name" value="Saposin"/>
    <property type="match status" value="1"/>
</dbReference>
<dbReference type="PROSITE" id="PS50015">
    <property type="entry name" value="SAP_B"/>
    <property type="match status" value="1"/>
</dbReference>
<reference key="1">
    <citation type="journal article" date="1992" name="EMBO J.">
        <title>Primary and secondary structure of the pore-forming peptide of pathogenic Entamoeba histolytica.</title>
        <authorList>
            <person name="Leippe M."/>
            <person name="Tannich E."/>
            <person name="Nickel R."/>
            <person name="van der Goot G."/>
            <person name="Pattus F."/>
            <person name="Horstmann R.D."/>
            <person name="Mueller-Eberhard H.J."/>
        </authorList>
    </citation>
    <scope>NUCLEOTIDE SEQUENCE [MRNA]</scope>
    <scope>PROTEIN SEQUENCE OF 22-46</scope>
    <source>
        <strain>ATCC 30459 / HM-1:IMSS / ABRM</strain>
    </source>
</reference>
<reference key="2">
    <citation type="journal article" date="1993" name="DNA Cell Biol.">
        <title>Unusual gene organization in the protozoan parasite Entamoeba histolytica.</title>
        <authorList>
            <person name="Bruchhaus I."/>
            <person name="Leippe M."/>
            <person name="Lioutas C."/>
            <person name="Tannich E."/>
        </authorList>
    </citation>
    <scope>NUCLEOTIDE SEQUENCE [GENOMIC DNA]</scope>
    <source>
        <strain>ATCC 30459 / HM-1:IMSS / ABRM</strain>
    </source>
</reference>
<reference evidence="9" key="3">
    <citation type="journal article" date="2005" name="Nature">
        <title>The genome of the protist parasite Entamoeba histolytica.</title>
        <authorList>
            <person name="Loftus B.J."/>
            <person name="Anderson I."/>
            <person name="Davies R."/>
            <person name="Alsmark U.C."/>
            <person name="Samuelson J."/>
            <person name="Amedeo P."/>
            <person name="Roncaglia P."/>
            <person name="Berriman M."/>
            <person name="Hirt R.P."/>
            <person name="Mann B.J."/>
            <person name="Nozaki T."/>
            <person name="Suh B."/>
            <person name="Pop M."/>
            <person name="Duchene M."/>
            <person name="Ackers J."/>
            <person name="Tannich E."/>
            <person name="Leippe M."/>
            <person name="Hofer M."/>
            <person name="Bruchhaus I."/>
            <person name="Willhoeft U."/>
            <person name="Bhattacharya A."/>
            <person name="Chillingworth T."/>
            <person name="Churcher C.M."/>
            <person name="Hance Z."/>
            <person name="Harris B."/>
            <person name="Harris D."/>
            <person name="Jagels K."/>
            <person name="Moule S."/>
            <person name="Mungall K.L."/>
            <person name="Ormond D."/>
            <person name="Squares R."/>
            <person name="Whitehead S."/>
            <person name="Quail M.A."/>
            <person name="Rabbinowitsch E."/>
            <person name="Norbertczak H."/>
            <person name="Price C."/>
            <person name="Wang Z."/>
            <person name="Guillen N."/>
            <person name="Gilchrist C."/>
            <person name="Stroup S.E."/>
            <person name="Bhattacharya S."/>
            <person name="Lohia A."/>
            <person name="Foster P.G."/>
            <person name="Sicheritz-Ponten T."/>
            <person name="Weber C."/>
            <person name="Singh U."/>
            <person name="Mukherjee C."/>
            <person name="El-Sayed N.M.A."/>
            <person name="Petri W.A."/>
            <person name="Clark C.G."/>
            <person name="Embley T.M."/>
            <person name="Barrell B.G."/>
            <person name="Fraser C.M."/>
            <person name="Hall N."/>
        </authorList>
    </citation>
    <scope>NUCLEOTIDE SEQUENCE [LARGE SCALE GENOMIC DNA]</scope>
    <source>
        <strain evidence="9">ATCC 30459 / HM-1:IMSS / ABRM</strain>
    </source>
</reference>
<reference key="4">
    <citation type="journal article" date="1991" name="Proc. Natl. Acad. Sci. U.S.A.">
        <title>Pore-forming peptide of pathogenic Entamoeba histolytica.</title>
        <authorList>
            <person name="Leippe M."/>
            <person name="Ebel S."/>
            <person name="Schoenberger O.L."/>
            <person name="Horstmann R.D."/>
            <person name="Mueller-Eberhard H.J."/>
        </authorList>
    </citation>
    <scope>PROTEIN SEQUENCE OF 22-46</scope>
    <scope>FUNCTION</scope>
    <scope>SUBUNIT</scope>
    <scope>DEVELOPMENTAL STAGE</scope>
</reference>
<reference key="5">
    <citation type="journal article" date="1994" name="Mol. Microbiol.">
        <title>Amoebapores, a family of membranolytic peptides from cytoplasmic granules of Entamoeba histolytica: isolation, primary structure, and pore formation in bacterial cytoplasmic membranes.</title>
        <authorList>
            <person name="Leippe M."/>
            <person name="Andrae J."/>
            <person name="Nickel R."/>
            <person name="Tannich E."/>
            <person name="Mueller-Eberhard H.J."/>
        </authorList>
    </citation>
    <scope>PARTIAL PROTEIN SEQUENCE</scope>
    <scope>FUNCTION</scope>
    <scope>SUBCELLULAR LOCATION</scope>
    <scope>DEVELOPMENTAL STAGE</scope>
    <source>
        <strain>ATCC 30459 / HM-1:IMSS / ABRM</strain>
    </source>
</reference>
<reference key="6">
    <citation type="journal article" date="1993" name="Mol. Biochem. Parasitol.">
        <title>Comparison of pore-forming peptides from pathogenic and nonpathogenic Entamoeba histolytica.</title>
        <authorList>
            <person name="Leippe M."/>
            <person name="Bahr E."/>
            <person name="Tannich E."/>
            <person name="Horstmann R.D."/>
        </authorList>
    </citation>
    <scope>FUNCTION</scope>
    <scope>POLYMORPHISM</scope>
    <source>
        <strain>SAW 142</strain>
    </source>
</reference>
<reference key="7">
    <citation type="journal article" date="1994" name="FEBS Lett.">
        <title>Pore-forming peptide of Entamoeba histolytica. Significance of positively charged amino acid residues for its mode of action.</title>
        <authorList>
            <person name="Andrae J."/>
            <person name="Leippe M."/>
        </authorList>
    </citation>
    <scope>FUNCTION</scope>
    <scope>BIOPHYSICOCHEMICAL PROPERTIES</scope>
</reference>
<reference evidence="10" key="8">
    <citation type="journal article" date="2004" name="J. Biol. Chem.">
        <title>Solution structure of the pore-forming protein of Entamoeba histolytica.</title>
        <authorList>
            <person name="Hecht O."/>
            <person name="Van Nuland N.A."/>
            <person name="Schleinkofer K."/>
            <person name="Dingley A.J."/>
            <person name="Bruhn H."/>
            <person name="Leippe M."/>
            <person name="Groetzinger J."/>
        </authorList>
    </citation>
    <scope>STRUCTURE BY NMR OF 22-98</scope>
    <scope>FUNCTION</scope>
    <scope>BIOPHYSICOCHEMICAL PROPERTIES</scope>
    <scope>SUBUNIT</scope>
    <scope>DISULFIDE BONDS</scope>
</reference>
<comment type="function">
    <text evidence="3 4 5 6 7">Forms pores in the cell membrane of host cells (PubMed:14970207, PubMed:1881907, PubMed:7525351, PubMed:7715451, PubMed:8515772). Has antibacterial activity against M.luteus, no activity against E.coli (PubMed:7715451). Implicated in the cytolytic activity of the parasite (PubMed:7715451).</text>
</comment>
<comment type="biophysicochemical properties">
    <phDependence>
        <text evidence="3 5">Optimum pH is 5.2.</text>
    </phDependence>
</comment>
<comment type="subunit">
    <text evidence="3 4">Monomer (at pH below 4 and pH above 6) (PubMed:14970207, PubMed:1881907). Homodimer (at pH 4-6) (PubMed:14970207). Hexamer; formed during insertion in the membrane (PubMed:1881907).</text>
</comment>
<comment type="subcellular location">
    <subcellularLocation>
        <location evidence="6">Cytoplasmic granule</location>
    </subcellularLocation>
</comment>
<comment type="developmental stage">
    <text evidence="4 6">Expressed in trophozoites (at protein level).</text>
</comment>
<comment type="polymorphism">
    <text evidence="7">Sequence variation may contribute to strain virulence (PubMed:8515772). Ameobapore A pore forming activity is higher in pathogenic strains such as HM-1:IMSS (PubMed:8515772).</text>
</comment>
<proteinExistence type="evidence at protein level"/>
<accession>P34095</accession>
<accession>A0A175JIN8</accession>
<accession>C4LX30</accession>
<accession>Q24839</accession>
<feature type="signal peptide" evidence="2 4">
    <location>
        <begin position="1"/>
        <end position="21"/>
    </location>
</feature>
<feature type="peptide" id="PRO_0000031668" description="Pore-forming peptide amoebapore A">
    <location>
        <begin position="22"/>
        <end position="98"/>
    </location>
</feature>
<feature type="domain" description="Saposin B-type" evidence="1">
    <location>
        <begin position="22"/>
        <end position="98"/>
    </location>
</feature>
<feature type="site" description="Essential for homodimerization" evidence="3">
    <location>
        <position position="96"/>
    </location>
</feature>
<feature type="disulfide bond" evidence="3 10">
    <location>
        <begin position="26"/>
        <end position="98"/>
    </location>
</feature>
<feature type="disulfide bond" evidence="3 10">
    <location>
        <begin position="29"/>
        <end position="92"/>
    </location>
</feature>
<feature type="disulfide bond" evidence="3 10">
    <location>
        <begin position="56"/>
        <end position="67"/>
    </location>
</feature>
<feature type="sequence variant">
    <original>L</original>
    <variation>F</variation>
    <location>
        <position position="71"/>
    </location>
</feature>
<feature type="helix" evidence="11">
    <location>
        <begin position="26"/>
        <end position="39"/>
    </location>
</feature>
<feature type="strand" evidence="11">
    <location>
        <begin position="41"/>
        <end position="43"/>
    </location>
</feature>
<feature type="helix" evidence="11">
    <location>
        <begin position="46"/>
        <end position="56"/>
    </location>
</feature>
<feature type="helix" evidence="11">
    <location>
        <begin position="64"/>
        <end position="73"/>
    </location>
</feature>
<feature type="helix" evidence="11">
    <location>
        <begin position="75"/>
        <end position="84"/>
    </location>
</feature>
<feature type="helix" evidence="11">
    <location>
        <begin position="88"/>
        <end position="95"/>
    </location>
</feature>
<sequence>MKAIVFVLIFAVAFAVTATHQGEILCNLCTGLINTLENLLTTKGADKVKDYISSLCNKASGFIATLCTKVLDFGIDKLIQLIEDKVDANAICAKIHAC</sequence>
<gene>
    <name evidence="9" type="ORF">EHI_159480</name>
</gene>
<keyword id="KW-0002">3D-structure</keyword>
<keyword id="KW-0044">Antibiotic</keyword>
<keyword id="KW-0929">Antimicrobial</keyword>
<keyword id="KW-0903">Direct protein sequencing</keyword>
<keyword id="KW-1015">Disulfide bond</keyword>
<keyword id="KW-1185">Reference proteome</keyword>
<keyword id="KW-0732">Signal</keyword>